<proteinExistence type="inferred from homology"/>
<keyword id="KW-0130">Cell adhesion</keyword>
<keyword id="KW-0281">Fimbrium</keyword>
<keyword id="KW-0732">Signal</keyword>
<keyword id="KW-0843">Virulence</keyword>
<reference key="1">
    <citation type="journal article" date="2007" name="Proc. Natl. Acad. Sci. U.S.A.">
        <title>Genome plasticity of BCG and impact on vaccine efficacy.</title>
        <authorList>
            <person name="Brosch R."/>
            <person name="Gordon S.V."/>
            <person name="Garnier T."/>
            <person name="Eiglmeier K."/>
            <person name="Frigui W."/>
            <person name="Valenti P."/>
            <person name="Dos Santos S."/>
            <person name="Duthoy S."/>
            <person name="Lacroix C."/>
            <person name="Garcia-Pelayo C."/>
            <person name="Inwald J.K."/>
            <person name="Golby P."/>
            <person name="Garcia J.N."/>
            <person name="Hewinson R.G."/>
            <person name="Behr M.A."/>
            <person name="Quail M.A."/>
            <person name="Churcher C."/>
            <person name="Barrell B.G."/>
            <person name="Parkhill J."/>
            <person name="Cole S.T."/>
        </authorList>
    </citation>
    <scope>NUCLEOTIDE SEQUENCE [LARGE SCALE GENOMIC DNA]</scope>
    <source>
        <strain>BCG / Pasteur 1173P2</strain>
    </source>
</reference>
<name>PILIN_MYCBP</name>
<dbReference type="EMBL" id="AM408590">
    <property type="protein sequence ID" value="CAL73367.1"/>
    <property type="molecule type" value="Genomic_DNA"/>
</dbReference>
<dbReference type="RefSeq" id="WP_003417257.1">
    <property type="nucleotide sequence ID" value="NC_008769.1"/>
</dbReference>
<dbReference type="GeneID" id="45427312"/>
<dbReference type="KEGG" id="mbb:BCG_3378c"/>
<dbReference type="HOGENOM" id="CLU_2260590_0_0_11"/>
<dbReference type="Proteomes" id="UP000001472">
    <property type="component" value="Chromosome"/>
</dbReference>
<dbReference type="GO" id="GO:0009289">
    <property type="term" value="C:pilus"/>
    <property type="evidence" value="ECO:0007669"/>
    <property type="project" value="UniProtKB-SubCell"/>
</dbReference>
<dbReference type="GO" id="GO:0007155">
    <property type="term" value="P:cell adhesion"/>
    <property type="evidence" value="ECO:0007669"/>
    <property type="project" value="UniProtKB-KW"/>
</dbReference>
<evidence type="ECO:0000250" key="1"/>
<evidence type="ECO:0000255" key="2"/>
<evidence type="ECO:0000256" key="3">
    <source>
        <dbReference type="SAM" id="MobiDB-lite"/>
    </source>
</evidence>
<evidence type="ECO:0000305" key="4"/>
<protein>
    <recommendedName>
        <fullName>Pilin</fullName>
    </recommendedName>
    <alternativeName>
        <fullName>Pili structural subunit</fullName>
    </alternativeName>
</protein>
<organism>
    <name type="scientific">Mycobacterium bovis (strain BCG / Pasteur 1173P2)</name>
    <dbReference type="NCBI Taxonomy" id="410289"/>
    <lineage>
        <taxon>Bacteria</taxon>
        <taxon>Bacillati</taxon>
        <taxon>Actinomycetota</taxon>
        <taxon>Actinomycetes</taxon>
        <taxon>Mycobacteriales</taxon>
        <taxon>Mycobacteriaceae</taxon>
        <taxon>Mycobacterium</taxon>
        <taxon>Mycobacterium tuberculosis complex</taxon>
    </lineage>
</organism>
<sequence>MYRFACRTLMLAACILATGVAGLGVGAQSAAQTAPVPDYYWCPGQPFDPAWGPNWDPYTCHDDFHRDSDGPDHSRDYPGPILEGPVLDDPGAAPPPPAAGGGA</sequence>
<comment type="function">
    <text evidence="1">Structural subunit of pili, which are thin, flexible, coiled-coil, aggregative fibers. Mediates adhesion to the extracellular matrix, an event that would facilitate direct interaction with the host epithelium during infection in the lung or other tissues (By similarity).</text>
</comment>
<comment type="subunit">
    <text evidence="1">Forms a homomer composed of subunits assembled in a large structure.</text>
</comment>
<comment type="subcellular location">
    <subcellularLocation>
        <location evidence="1">Fimbrium</location>
    </subcellularLocation>
    <text evidence="1">Part of the pili surface structure.</text>
</comment>
<comment type="similarity">
    <text evidence="4">Belongs to the mycobacterial pilin family.</text>
</comment>
<feature type="signal peptide" evidence="2">
    <location>
        <begin position="1"/>
        <end position="30"/>
    </location>
</feature>
<feature type="chain" id="PRO_0000314594" description="Pilin">
    <location>
        <begin position="31"/>
        <end position="103"/>
    </location>
</feature>
<feature type="region of interest" description="Disordered" evidence="3">
    <location>
        <begin position="61"/>
        <end position="103"/>
    </location>
</feature>
<feature type="compositionally biased region" description="Basic and acidic residues" evidence="3">
    <location>
        <begin position="61"/>
        <end position="76"/>
    </location>
</feature>
<feature type="compositionally biased region" description="Pro residues" evidence="3">
    <location>
        <begin position="92"/>
        <end position="103"/>
    </location>
</feature>
<gene>
    <name type="primary">mtp</name>
    <name type="ordered locus">BCG_3378c</name>
</gene>
<accession>A1KNZ9</accession>